<sequence length="417" mass="42437">MAVQAALLSSHPFIPFGFGGSADGLVSAFGSLDKGCCFEDDESGASAGALLSGSEGGDVREATRDLLSFIDSASSNIKLALDKPGKSKRKVNHRKYLQKQIKRCSGLMGTAPPRPASPSAADAPAKRPPGAPTVATPAHCKAAPRREATQAAAAASLQSRSLAALFDSLRHIPGGAETAGGAEAVSVPGLGAASAVGDGAGTAVSSVAPGTRKVPLRARNLPPSFFTEPSRVGCGGASGVPSGQGVSLGDLEKGAEAVEFFELLAPDFGSGNDSGVLMAADPLDPFPAGATVLRGPLELESGPFEQPAMVGNLLYPEPWNTPSCPQTKKPPVAGVRGGVTLNEPVRLLYPTALDSPGGEDAPALSSFTPFFPDCALPPPHQVSYDYSAGYSRAVYPSLWRPDGVWEGASGEEGGHPD</sequence>
<protein>
    <recommendedName>
        <fullName>Protein FAM181B</fullName>
    </recommendedName>
</protein>
<proteinExistence type="evidence at transcript level"/>
<dbReference type="EMBL" id="AB041569">
    <property type="protein sequence ID" value="BAA95053.1"/>
    <property type="molecule type" value="mRNA"/>
</dbReference>
<dbReference type="EMBL" id="BC043329">
    <property type="protein sequence ID" value="AAH43329.1"/>
    <property type="molecule type" value="mRNA"/>
</dbReference>
<dbReference type="EMBL" id="AK141493">
    <property type="protein sequence ID" value="BAE24701.1"/>
    <property type="molecule type" value="mRNA"/>
</dbReference>
<dbReference type="STRING" id="10090.ENSMUSP00000146473"/>
<dbReference type="GlyGen" id="Q80VF6">
    <property type="glycosylation" value="1 site"/>
</dbReference>
<dbReference type="PhosphoSitePlus" id="Q80VF6"/>
<dbReference type="ProteomicsDB" id="275980">
    <molecule id="Q80VF6-1"/>
</dbReference>
<dbReference type="ProteomicsDB" id="275981">
    <molecule id="Q80VF6-2"/>
</dbReference>
<dbReference type="UCSC" id="uc009iim.1">
    <molecule id="Q80VF6-1"/>
    <property type="organism name" value="mouse"/>
</dbReference>
<dbReference type="AGR" id="MGI:1930951"/>
<dbReference type="MGI" id="MGI:1930951">
    <property type="gene designation" value="Fam181b"/>
</dbReference>
<dbReference type="InParanoid" id="Q80VF6"/>
<dbReference type="ChiTaRS" id="Fam181b">
    <property type="organism name" value="mouse"/>
</dbReference>
<dbReference type="PRO" id="PR:Q80VF6"/>
<dbReference type="Proteomes" id="UP000000589">
    <property type="component" value="Unplaced"/>
</dbReference>
<dbReference type="RNAct" id="Q80VF6">
    <property type="molecule type" value="protein"/>
</dbReference>
<dbReference type="InterPro" id="IPR029359">
    <property type="entry name" value="FAM181"/>
</dbReference>
<dbReference type="InterPro" id="IPR053819">
    <property type="entry name" value="TEADIR3_omega_loop"/>
</dbReference>
<dbReference type="PANTHER" id="PTHR33766">
    <property type="entry name" value="PROTEIN FAM181B"/>
    <property type="match status" value="1"/>
</dbReference>
<dbReference type="PANTHER" id="PTHR33766:SF2">
    <property type="entry name" value="PROTEIN FAM181B"/>
    <property type="match status" value="1"/>
</dbReference>
<dbReference type="Pfam" id="PF15238">
    <property type="entry name" value="TEADIR3"/>
    <property type="match status" value="1"/>
</dbReference>
<comment type="alternative products">
    <event type="alternative splicing"/>
    <isoform>
        <id>Q80VF6-1</id>
        <name>1</name>
        <sequence type="displayed"/>
    </isoform>
    <isoform>
        <id>Q80VF6-2</id>
        <name>2</name>
        <sequence type="described" ref="VSP_032190 VSP_032191"/>
    </isoform>
</comment>
<comment type="similarity">
    <text evidence="3">Belongs to the FAM181 family.</text>
</comment>
<reference key="1">
    <citation type="submission" date="2000-04" db="EMBL/GenBank/DDBJ databases">
        <title>Isolation of full-length cDNA clones from mouse brain cDNA library made by oligo-capping method.</title>
        <authorList>
            <person name="Osada N."/>
            <person name="Kusuda J."/>
            <person name="Tanuma R."/>
            <person name="Ito A."/>
            <person name="Hirata M."/>
            <person name="Sugano S."/>
            <person name="Hashimoto K."/>
        </authorList>
    </citation>
    <scope>NUCLEOTIDE SEQUENCE [LARGE SCALE MRNA] (ISOFORM 2)</scope>
    <source>
        <strain>C57BL/6J</strain>
        <tissue>Brain</tissue>
    </source>
</reference>
<reference key="2">
    <citation type="journal article" date="2004" name="Genome Res.">
        <title>The status, quality, and expansion of the NIH full-length cDNA project: the Mammalian Gene Collection (MGC).</title>
        <authorList>
            <consortium name="The MGC Project Team"/>
        </authorList>
    </citation>
    <scope>NUCLEOTIDE SEQUENCE [LARGE SCALE MRNA] (ISOFORM 1)</scope>
    <source>
        <strain>FVB/N-3</strain>
        <tissue>Mammary tumor</tissue>
    </source>
</reference>
<reference key="3">
    <citation type="journal article" date="2005" name="Science">
        <title>The transcriptional landscape of the mammalian genome.</title>
        <authorList>
            <person name="Carninci P."/>
            <person name="Kasukawa T."/>
            <person name="Katayama S."/>
            <person name="Gough J."/>
            <person name="Frith M.C."/>
            <person name="Maeda N."/>
            <person name="Oyama R."/>
            <person name="Ravasi T."/>
            <person name="Lenhard B."/>
            <person name="Wells C."/>
            <person name="Kodzius R."/>
            <person name="Shimokawa K."/>
            <person name="Bajic V.B."/>
            <person name="Brenner S.E."/>
            <person name="Batalov S."/>
            <person name="Forrest A.R."/>
            <person name="Zavolan M."/>
            <person name="Davis M.J."/>
            <person name="Wilming L.G."/>
            <person name="Aidinis V."/>
            <person name="Allen J.E."/>
            <person name="Ambesi-Impiombato A."/>
            <person name="Apweiler R."/>
            <person name="Aturaliya R.N."/>
            <person name="Bailey T.L."/>
            <person name="Bansal M."/>
            <person name="Baxter L."/>
            <person name="Beisel K.W."/>
            <person name="Bersano T."/>
            <person name="Bono H."/>
            <person name="Chalk A.M."/>
            <person name="Chiu K.P."/>
            <person name="Choudhary V."/>
            <person name="Christoffels A."/>
            <person name="Clutterbuck D.R."/>
            <person name="Crowe M.L."/>
            <person name="Dalla E."/>
            <person name="Dalrymple B.P."/>
            <person name="de Bono B."/>
            <person name="Della Gatta G."/>
            <person name="di Bernardo D."/>
            <person name="Down T."/>
            <person name="Engstrom P."/>
            <person name="Fagiolini M."/>
            <person name="Faulkner G."/>
            <person name="Fletcher C.F."/>
            <person name="Fukushima T."/>
            <person name="Furuno M."/>
            <person name="Futaki S."/>
            <person name="Gariboldi M."/>
            <person name="Georgii-Hemming P."/>
            <person name="Gingeras T.R."/>
            <person name="Gojobori T."/>
            <person name="Green R.E."/>
            <person name="Gustincich S."/>
            <person name="Harbers M."/>
            <person name="Hayashi Y."/>
            <person name="Hensch T.K."/>
            <person name="Hirokawa N."/>
            <person name="Hill D."/>
            <person name="Huminiecki L."/>
            <person name="Iacono M."/>
            <person name="Ikeo K."/>
            <person name="Iwama A."/>
            <person name="Ishikawa T."/>
            <person name="Jakt M."/>
            <person name="Kanapin A."/>
            <person name="Katoh M."/>
            <person name="Kawasawa Y."/>
            <person name="Kelso J."/>
            <person name="Kitamura H."/>
            <person name="Kitano H."/>
            <person name="Kollias G."/>
            <person name="Krishnan S.P."/>
            <person name="Kruger A."/>
            <person name="Kummerfeld S.K."/>
            <person name="Kurochkin I.V."/>
            <person name="Lareau L.F."/>
            <person name="Lazarevic D."/>
            <person name="Lipovich L."/>
            <person name="Liu J."/>
            <person name="Liuni S."/>
            <person name="McWilliam S."/>
            <person name="Madan Babu M."/>
            <person name="Madera M."/>
            <person name="Marchionni L."/>
            <person name="Matsuda H."/>
            <person name="Matsuzawa S."/>
            <person name="Miki H."/>
            <person name="Mignone F."/>
            <person name="Miyake S."/>
            <person name="Morris K."/>
            <person name="Mottagui-Tabar S."/>
            <person name="Mulder N."/>
            <person name="Nakano N."/>
            <person name="Nakauchi H."/>
            <person name="Ng P."/>
            <person name="Nilsson R."/>
            <person name="Nishiguchi S."/>
            <person name="Nishikawa S."/>
            <person name="Nori F."/>
            <person name="Ohara O."/>
            <person name="Okazaki Y."/>
            <person name="Orlando V."/>
            <person name="Pang K.C."/>
            <person name="Pavan W.J."/>
            <person name="Pavesi G."/>
            <person name="Pesole G."/>
            <person name="Petrovsky N."/>
            <person name="Piazza S."/>
            <person name="Reed J."/>
            <person name="Reid J.F."/>
            <person name="Ring B.Z."/>
            <person name="Ringwald M."/>
            <person name="Rost B."/>
            <person name="Ruan Y."/>
            <person name="Salzberg S.L."/>
            <person name="Sandelin A."/>
            <person name="Schneider C."/>
            <person name="Schoenbach C."/>
            <person name="Sekiguchi K."/>
            <person name="Semple C.A."/>
            <person name="Seno S."/>
            <person name="Sessa L."/>
            <person name="Sheng Y."/>
            <person name="Shibata Y."/>
            <person name="Shimada H."/>
            <person name="Shimada K."/>
            <person name="Silva D."/>
            <person name="Sinclair B."/>
            <person name="Sperling S."/>
            <person name="Stupka E."/>
            <person name="Sugiura K."/>
            <person name="Sultana R."/>
            <person name="Takenaka Y."/>
            <person name="Taki K."/>
            <person name="Tammoja K."/>
            <person name="Tan S.L."/>
            <person name="Tang S."/>
            <person name="Taylor M.S."/>
            <person name="Tegner J."/>
            <person name="Teichmann S.A."/>
            <person name="Ueda H.R."/>
            <person name="van Nimwegen E."/>
            <person name="Verardo R."/>
            <person name="Wei C.L."/>
            <person name="Yagi K."/>
            <person name="Yamanishi H."/>
            <person name="Zabarovsky E."/>
            <person name="Zhu S."/>
            <person name="Zimmer A."/>
            <person name="Hide W."/>
            <person name="Bult C."/>
            <person name="Grimmond S.M."/>
            <person name="Teasdale R.D."/>
            <person name="Liu E.T."/>
            <person name="Brusic V."/>
            <person name="Quackenbush J."/>
            <person name="Wahlestedt C."/>
            <person name="Mattick J.S."/>
            <person name="Hume D.A."/>
            <person name="Kai C."/>
            <person name="Sasaki D."/>
            <person name="Tomaru Y."/>
            <person name="Fukuda S."/>
            <person name="Kanamori-Katayama M."/>
            <person name="Suzuki M."/>
            <person name="Aoki J."/>
            <person name="Arakawa T."/>
            <person name="Iida J."/>
            <person name="Imamura K."/>
            <person name="Itoh M."/>
            <person name="Kato T."/>
            <person name="Kawaji H."/>
            <person name="Kawagashira N."/>
            <person name="Kawashima T."/>
            <person name="Kojima M."/>
            <person name="Kondo S."/>
            <person name="Konno H."/>
            <person name="Nakano K."/>
            <person name="Ninomiya N."/>
            <person name="Nishio T."/>
            <person name="Okada M."/>
            <person name="Plessy C."/>
            <person name="Shibata K."/>
            <person name="Shiraki T."/>
            <person name="Suzuki S."/>
            <person name="Tagami M."/>
            <person name="Waki K."/>
            <person name="Watahiki A."/>
            <person name="Okamura-Oho Y."/>
            <person name="Suzuki H."/>
            <person name="Kawai J."/>
            <person name="Hayashizaki Y."/>
        </authorList>
    </citation>
    <scope>NUCLEOTIDE SEQUENCE [LARGE SCALE MRNA] OF 88-417 (ISOFORM 1)</scope>
    <source>
        <strain>C57BL/6J</strain>
        <tissue>Spinal cord</tissue>
    </source>
</reference>
<keyword id="KW-0025">Alternative splicing</keyword>
<keyword id="KW-1185">Reference proteome</keyword>
<evidence type="ECO:0000256" key="1">
    <source>
        <dbReference type="SAM" id="MobiDB-lite"/>
    </source>
</evidence>
<evidence type="ECO:0000303" key="2">
    <source ref="1"/>
</evidence>
<evidence type="ECO:0000305" key="3"/>
<feature type="chain" id="PRO_0000324303" description="Protein FAM181B">
    <location>
        <begin position="1"/>
        <end position="417"/>
    </location>
</feature>
<feature type="region of interest" description="Disordered" evidence="1">
    <location>
        <begin position="104"/>
        <end position="147"/>
    </location>
</feature>
<feature type="splice variant" id="VSP_032190" description="In isoform 2." evidence="2">
    <original>GGASGVPSGQGVSLGDLEKGAEAVEFFELLAPDFGSGNDSGVLMAADPLDPFPAGATVLRGPLELESGPFEQPAMVGNLLYPEPWNTPSCPQTKKP</original>
    <variation>WLAPAASHRARA</variation>
    <location>
        <begin position="235"/>
        <end position="330"/>
    </location>
</feature>
<feature type="splice variant" id="VSP_032191" description="In isoform 2." evidence="2">
    <location>
        <begin position="331"/>
        <end position="417"/>
    </location>
</feature>
<feature type="sequence conflict" description="In Ref. 1; BAA95053." evidence="3" ref="1">
    <original>S</original>
    <variation>T</variation>
    <location>
        <position position="46"/>
    </location>
</feature>
<feature type="sequence conflict" description="In Ref. 1; BAA95053." evidence="3" ref="1">
    <original>K</original>
    <variation>R</variation>
    <location>
        <position position="102"/>
    </location>
</feature>
<accession>Q80VF6</accession>
<accession>Q3URI7</accession>
<accession>Q9JJD9</accession>
<gene>
    <name type="primary">Fam181b</name>
    <name type="ORF">MNCb-1231</name>
</gene>
<organism>
    <name type="scientific">Mus musculus</name>
    <name type="common">Mouse</name>
    <dbReference type="NCBI Taxonomy" id="10090"/>
    <lineage>
        <taxon>Eukaryota</taxon>
        <taxon>Metazoa</taxon>
        <taxon>Chordata</taxon>
        <taxon>Craniata</taxon>
        <taxon>Vertebrata</taxon>
        <taxon>Euteleostomi</taxon>
        <taxon>Mammalia</taxon>
        <taxon>Eutheria</taxon>
        <taxon>Euarchontoglires</taxon>
        <taxon>Glires</taxon>
        <taxon>Rodentia</taxon>
        <taxon>Myomorpha</taxon>
        <taxon>Muroidea</taxon>
        <taxon>Muridae</taxon>
        <taxon>Murinae</taxon>
        <taxon>Mus</taxon>
        <taxon>Mus</taxon>
    </lineage>
</organism>
<name>F181B_MOUSE</name>